<proteinExistence type="inferred from homology"/>
<dbReference type="EMBL" id="CP001113">
    <property type="protein sequence ID" value="ACF63310.1"/>
    <property type="molecule type" value="Genomic_DNA"/>
</dbReference>
<dbReference type="RefSeq" id="WP_001216370.1">
    <property type="nucleotide sequence ID" value="NZ_CCMR01000003.1"/>
</dbReference>
<dbReference type="SMR" id="B4SUR5"/>
<dbReference type="GeneID" id="89546962"/>
<dbReference type="KEGG" id="see:SNSL254_A3682"/>
<dbReference type="HOGENOM" id="CLU_074407_2_0_6"/>
<dbReference type="Proteomes" id="UP000008824">
    <property type="component" value="Chromosome"/>
</dbReference>
<dbReference type="GO" id="GO:0022625">
    <property type="term" value="C:cytosolic large ribosomal subunit"/>
    <property type="evidence" value="ECO:0007669"/>
    <property type="project" value="TreeGrafter"/>
</dbReference>
<dbReference type="GO" id="GO:0003735">
    <property type="term" value="F:structural constituent of ribosome"/>
    <property type="evidence" value="ECO:0007669"/>
    <property type="project" value="InterPro"/>
</dbReference>
<dbReference type="GO" id="GO:0006412">
    <property type="term" value="P:translation"/>
    <property type="evidence" value="ECO:0007669"/>
    <property type="project" value="UniProtKB-UniRule"/>
</dbReference>
<dbReference type="FunFam" id="3.90.1030.10:FF:000001">
    <property type="entry name" value="50S ribosomal protein L17"/>
    <property type="match status" value="1"/>
</dbReference>
<dbReference type="Gene3D" id="3.90.1030.10">
    <property type="entry name" value="Ribosomal protein L17"/>
    <property type="match status" value="1"/>
</dbReference>
<dbReference type="HAMAP" id="MF_01368">
    <property type="entry name" value="Ribosomal_bL17"/>
    <property type="match status" value="1"/>
</dbReference>
<dbReference type="InterPro" id="IPR000456">
    <property type="entry name" value="Ribosomal_bL17"/>
</dbReference>
<dbReference type="InterPro" id="IPR047859">
    <property type="entry name" value="Ribosomal_bL17_CS"/>
</dbReference>
<dbReference type="InterPro" id="IPR036373">
    <property type="entry name" value="Ribosomal_bL17_sf"/>
</dbReference>
<dbReference type="NCBIfam" id="TIGR00059">
    <property type="entry name" value="L17"/>
    <property type="match status" value="1"/>
</dbReference>
<dbReference type="PANTHER" id="PTHR14413:SF16">
    <property type="entry name" value="LARGE RIBOSOMAL SUBUNIT PROTEIN BL17M"/>
    <property type="match status" value="1"/>
</dbReference>
<dbReference type="PANTHER" id="PTHR14413">
    <property type="entry name" value="RIBOSOMAL PROTEIN L17"/>
    <property type="match status" value="1"/>
</dbReference>
<dbReference type="Pfam" id="PF01196">
    <property type="entry name" value="Ribosomal_L17"/>
    <property type="match status" value="1"/>
</dbReference>
<dbReference type="SUPFAM" id="SSF64263">
    <property type="entry name" value="Prokaryotic ribosomal protein L17"/>
    <property type="match status" value="1"/>
</dbReference>
<dbReference type="PROSITE" id="PS01167">
    <property type="entry name" value="RIBOSOMAL_L17"/>
    <property type="match status" value="1"/>
</dbReference>
<name>RL17_SALNS</name>
<accession>B4SUR5</accession>
<protein>
    <recommendedName>
        <fullName evidence="1">Large ribosomal subunit protein bL17</fullName>
    </recommendedName>
    <alternativeName>
        <fullName evidence="2">50S ribosomal protein L17</fullName>
    </alternativeName>
</protein>
<evidence type="ECO:0000255" key="1">
    <source>
        <dbReference type="HAMAP-Rule" id="MF_01368"/>
    </source>
</evidence>
<evidence type="ECO:0000305" key="2"/>
<organism>
    <name type="scientific">Salmonella newport (strain SL254)</name>
    <dbReference type="NCBI Taxonomy" id="423368"/>
    <lineage>
        <taxon>Bacteria</taxon>
        <taxon>Pseudomonadati</taxon>
        <taxon>Pseudomonadota</taxon>
        <taxon>Gammaproteobacteria</taxon>
        <taxon>Enterobacterales</taxon>
        <taxon>Enterobacteriaceae</taxon>
        <taxon>Salmonella</taxon>
    </lineage>
</organism>
<sequence>MRHRKSGRQLNRNSSHRQAMFRNMAGSLVRHEIIKTTLPKAKELRRVVEPLITLAKTDSVANRRLAFARTRDNEIVAKLFNELGPRFASRAGGYTRILKCGFRAGDNAPMAYIELVDRSEKTEAAAE</sequence>
<reference key="1">
    <citation type="journal article" date="2011" name="J. Bacteriol.">
        <title>Comparative genomics of 28 Salmonella enterica isolates: evidence for CRISPR-mediated adaptive sublineage evolution.</title>
        <authorList>
            <person name="Fricke W.F."/>
            <person name="Mammel M.K."/>
            <person name="McDermott P.F."/>
            <person name="Tartera C."/>
            <person name="White D.G."/>
            <person name="Leclerc J.E."/>
            <person name="Ravel J."/>
            <person name="Cebula T.A."/>
        </authorList>
    </citation>
    <scope>NUCLEOTIDE SEQUENCE [LARGE SCALE GENOMIC DNA]</scope>
    <source>
        <strain>SL254</strain>
    </source>
</reference>
<feature type="chain" id="PRO_1000144480" description="Large ribosomal subunit protein bL17">
    <location>
        <begin position="1"/>
        <end position="127"/>
    </location>
</feature>
<gene>
    <name evidence="1" type="primary">rplQ</name>
    <name type="ordered locus">SNSL254_A3682</name>
</gene>
<keyword id="KW-0687">Ribonucleoprotein</keyword>
<keyword id="KW-0689">Ribosomal protein</keyword>
<comment type="subunit">
    <text evidence="1">Part of the 50S ribosomal subunit. Contacts protein L32.</text>
</comment>
<comment type="similarity">
    <text evidence="1">Belongs to the bacterial ribosomal protein bL17 family.</text>
</comment>